<accession>A8FSS4</accession>
<evidence type="ECO:0000255" key="1">
    <source>
        <dbReference type="HAMAP-Rule" id="MF_01010"/>
    </source>
</evidence>
<comment type="function">
    <text evidence="1">Catalyzes the formation of 5-methyl-uridine at position 1939 (m5U1939) in 23S rRNA.</text>
</comment>
<comment type="catalytic activity">
    <reaction evidence="1">
        <text>uridine(1939) in 23S rRNA + S-adenosyl-L-methionine = 5-methyluridine(1939) in 23S rRNA + S-adenosyl-L-homocysteine + H(+)</text>
        <dbReference type="Rhea" id="RHEA:42908"/>
        <dbReference type="Rhea" id="RHEA-COMP:10278"/>
        <dbReference type="Rhea" id="RHEA-COMP:10279"/>
        <dbReference type="ChEBI" id="CHEBI:15378"/>
        <dbReference type="ChEBI" id="CHEBI:57856"/>
        <dbReference type="ChEBI" id="CHEBI:59789"/>
        <dbReference type="ChEBI" id="CHEBI:65315"/>
        <dbReference type="ChEBI" id="CHEBI:74447"/>
        <dbReference type="EC" id="2.1.1.190"/>
    </reaction>
</comment>
<comment type="similarity">
    <text evidence="1">Belongs to the class I-like SAM-binding methyltransferase superfamily. RNA M5U methyltransferase family. RlmD subfamily.</text>
</comment>
<gene>
    <name evidence="1" type="primary">rlmD</name>
    <name type="synonym">rumA</name>
    <name type="ordered locus">Ssed_1286</name>
</gene>
<organism>
    <name type="scientific">Shewanella sediminis (strain HAW-EB3)</name>
    <dbReference type="NCBI Taxonomy" id="425104"/>
    <lineage>
        <taxon>Bacteria</taxon>
        <taxon>Pseudomonadati</taxon>
        <taxon>Pseudomonadota</taxon>
        <taxon>Gammaproteobacteria</taxon>
        <taxon>Alteromonadales</taxon>
        <taxon>Shewanellaceae</taxon>
        <taxon>Shewanella</taxon>
    </lineage>
</organism>
<keyword id="KW-0004">4Fe-4S</keyword>
<keyword id="KW-0408">Iron</keyword>
<keyword id="KW-0411">Iron-sulfur</keyword>
<keyword id="KW-0479">Metal-binding</keyword>
<keyword id="KW-0489">Methyltransferase</keyword>
<keyword id="KW-1185">Reference proteome</keyword>
<keyword id="KW-0698">rRNA processing</keyword>
<keyword id="KW-0949">S-adenosyl-L-methionine</keyword>
<keyword id="KW-0808">Transferase</keyword>
<dbReference type="EC" id="2.1.1.190" evidence="1"/>
<dbReference type="EMBL" id="CP000821">
    <property type="protein sequence ID" value="ABV35897.1"/>
    <property type="molecule type" value="Genomic_DNA"/>
</dbReference>
<dbReference type="RefSeq" id="WP_012141633.1">
    <property type="nucleotide sequence ID" value="NC_009831.1"/>
</dbReference>
<dbReference type="SMR" id="A8FSS4"/>
<dbReference type="STRING" id="425104.Ssed_1286"/>
<dbReference type="KEGG" id="sse:Ssed_1286"/>
<dbReference type="eggNOG" id="COG2265">
    <property type="taxonomic scope" value="Bacteria"/>
</dbReference>
<dbReference type="HOGENOM" id="CLU_014689_8_2_6"/>
<dbReference type="OrthoDB" id="9804590at2"/>
<dbReference type="Proteomes" id="UP000002015">
    <property type="component" value="Chromosome"/>
</dbReference>
<dbReference type="GO" id="GO:0051539">
    <property type="term" value="F:4 iron, 4 sulfur cluster binding"/>
    <property type="evidence" value="ECO:0007669"/>
    <property type="project" value="UniProtKB-KW"/>
</dbReference>
<dbReference type="GO" id="GO:0005506">
    <property type="term" value="F:iron ion binding"/>
    <property type="evidence" value="ECO:0007669"/>
    <property type="project" value="UniProtKB-UniRule"/>
</dbReference>
<dbReference type="GO" id="GO:0003723">
    <property type="term" value="F:RNA binding"/>
    <property type="evidence" value="ECO:0007669"/>
    <property type="project" value="InterPro"/>
</dbReference>
<dbReference type="GO" id="GO:0070041">
    <property type="term" value="F:rRNA (uridine-C5-)-methyltransferase activity"/>
    <property type="evidence" value="ECO:0007669"/>
    <property type="project" value="UniProtKB-UniRule"/>
</dbReference>
<dbReference type="GO" id="GO:0070475">
    <property type="term" value="P:rRNA base methylation"/>
    <property type="evidence" value="ECO:0007669"/>
    <property type="project" value="TreeGrafter"/>
</dbReference>
<dbReference type="CDD" id="cd02440">
    <property type="entry name" value="AdoMet_MTases"/>
    <property type="match status" value="1"/>
</dbReference>
<dbReference type="FunFam" id="3.40.50.150:FF:000009">
    <property type="entry name" value="23S rRNA (Uracil(1939)-C(5))-methyltransferase RlmD"/>
    <property type="match status" value="1"/>
</dbReference>
<dbReference type="FunFam" id="2.40.50.140:FF:000097">
    <property type="entry name" value="23S rRNA (uracil(1939)-C(5))-methyltransferase RlmD"/>
    <property type="match status" value="1"/>
</dbReference>
<dbReference type="Gene3D" id="2.40.50.1070">
    <property type="match status" value="1"/>
</dbReference>
<dbReference type="Gene3D" id="2.40.50.140">
    <property type="entry name" value="Nucleic acid-binding proteins"/>
    <property type="match status" value="1"/>
</dbReference>
<dbReference type="Gene3D" id="3.40.50.150">
    <property type="entry name" value="Vaccinia Virus protein VP39"/>
    <property type="match status" value="1"/>
</dbReference>
<dbReference type="HAMAP" id="MF_01010">
    <property type="entry name" value="23SrRNA_methyltr_RlmD"/>
    <property type="match status" value="1"/>
</dbReference>
<dbReference type="InterPro" id="IPR001566">
    <property type="entry name" value="23S_rRNA_MeTrfase_RlmD"/>
</dbReference>
<dbReference type="InterPro" id="IPR030390">
    <property type="entry name" value="MeTrfase_TrmA_AS"/>
</dbReference>
<dbReference type="InterPro" id="IPR030391">
    <property type="entry name" value="MeTrfase_TrmA_CS"/>
</dbReference>
<dbReference type="InterPro" id="IPR012340">
    <property type="entry name" value="NA-bd_OB-fold"/>
</dbReference>
<dbReference type="InterPro" id="IPR029063">
    <property type="entry name" value="SAM-dependent_MTases_sf"/>
</dbReference>
<dbReference type="InterPro" id="IPR002792">
    <property type="entry name" value="TRAM_dom"/>
</dbReference>
<dbReference type="InterPro" id="IPR010280">
    <property type="entry name" value="U5_MeTrfase_fam"/>
</dbReference>
<dbReference type="NCBIfam" id="NF009639">
    <property type="entry name" value="PRK13168.1"/>
    <property type="match status" value="1"/>
</dbReference>
<dbReference type="NCBIfam" id="TIGR00479">
    <property type="entry name" value="rumA"/>
    <property type="match status" value="1"/>
</dbReference>
<dbReference type="PANTHER" id="PTHR11061:SF49">
    <property type="entry name" value="23S RRNA (URACIL(1939)-C(5))-METHYLTRANSFERASE RLMD"/>
    <property type="match status" value="1"/>
</dbReference>
<dbReference type="PANTHER" id="PTHR11061">
    <property type="entry name" value="RNA M5U METHYLTRANSFERASE"/>
    <property type="match status" value="1"/>
</dbReference>
<dbReference type="Pfam" id="PF01938">
    <property type="entry name" value="TRAM"/>
    <property type="match status" value="1"/>
</dbReference>
<dbReference type="Pfam" id="PF05958">
    <property type="entry name" value="tRNA_U5-meth_tr"/>
    <property type="match status" value="1"/>
</dbReference>
<dbReference type="SUPFAM" id="SSF50249">
    <property type="entry name" value="Nucleic acid-binding proteins"/>
    <property type="match status" value="1"/>
</dbReference>
<dbReference type="SUPFAM" id="SSF53335">
    <property type="entry name" value="S-adenosyl-L-methionine-dependent methyltransferases"/>
    <property type="match status" value="1"/>
</dbReference>
<dbReference type="PROSITE" id="PS51687">
    <property type="entry name" value="SAM_MT_RNA_M5U"/>
    <property type="match status" value="1"/>
</dbReference>
<dbReference type="PROSITE" id="PS50926">
    <property type="entry name" value="TRAM"/>
    <property type="match status" value="1"/>
</dbReference>
<dbReference type="PROSITE" id="PS01230">
    <property type="entry name" value="TRMA_1"/>
    <property type="match status" value="1"/>
</dbReference>
<dbReference type="PROSITE" id="PS01231">
    <property type="entry name" value="TRMA_2"/>
    <property type="match status" value="1"/>
</dbReference>
<name>RLMD_SHESH</name>
<reference key="1">
    <citation type="submission" date="2007-08" db="EMBL/GenBank/DDBJ databases">
        <title>Complete sequence of Shewanella sediminis HAW-EB3.</title>
        <authorList>
            <consortium name="US DOE Joint Genome Institute"/>
            <person name="Copeland A."/>
            <person name="Lucas S."/>
            <person name="Lapidus A."/>
            <person name="Barry K."/>
            <person name="Glavina del Rio T."/>
            <person name="Dalin E."/>
            <person name="Tice H."/>
            <person name="Pitluck S."/>
            <person name="Chertkov O."/>
            <person name="Brettin T."/>
            <person name="Bruce D."/>
            <person name="Detter J.C."/>
            <person name="Han C."/>
            <person name="Schmutz J."/>
            <person name="Larimer F."/>
            <person name="Land M."/>
            <person name="Hauser L."/>
            <person name="Kyrpides N."/>
            <person name="Kim E."/>
            <person name="Zhao J.-S."/>
            <person name="Richardson P."/>
        </authorList>
    </citation>
    <scope>NUCLEOTIDE SEQUENCE [LARGE SCALE GENOMIC DNA]</scope>
    <source>
        <strain>HAW-EB3</strain>
    </source>
</reference>
<protein>
    <recommendedName>
        <fullName evidence="1">23S rRNA (uracil(1939)-C(5))-methyltransferase RlmD</fullName>
        <ecNumber evidence="1">2.1.1.190</ecNumber>
    </recommendedName>
    <alternativeName>
        <fullName evidence="1">23S rRNA(m5U1939)-methyltransferase</fullName>
    </alternativeName>
</protein>
<sequence>MAQFFKAKPNSSKQLSAKVTLEVTKLDHLGAGMAQHQGKIVFIPGALPNEKVTVQLTEQKKRHARAKLLKIESDSNDRVEPKCPHYQQCGGCDLQHLSIDKQRSYKQSALVDLMAKLSHTEAESLAPALIGQEWDYRRRARLATHYNKESKQITLGFRASASKQVINIDVCPVLAKPLSDLIAPLSLLLNQLSGKKALGHLELIDADNGYFAVLRMTKALSDKDAKKLTAFANEKSISLIVQGNEGEFTILGDRNELPYYALDDVKLNFTPGNFIQVNAAINESMVKQAVDWLSVKPNERVLDLFCGVGNFSLPLAKSGAEVIGVEGVPEMVKQARENAADSGLDNVSFFHTDLSADLSKETWLGKVDKLLLDPARAGAFESLQWLKKMKPKAIVYVSCDPSSLARDSEPLLKHGYKLKKLGLIDMFPQTHHIEAMALFELD</sequence>
<feature type="chain" id="PRO_1000200855" description="23S rRNA (uracil(1939)-C(5))-methyltransferase RlmD">
    <location>
        <begin position="1"/>
        <end position="442"/>
    </location>
</feature>
<feature type="domain" description="TRAM" evidence="1">
    <location>
        <begin position="12"/>
        <end position="70"/>
    </location>
</feature>
<feature type="active site" description="Nucleophile" evidence="1">
    <location>
        <position position="399"/>
    </location>
</feature>
<feature type="binding site" evidence="1">
    <location>
        <position position="83"/>
    </location>
    <ligand>
        <name>[4Fe-4S] cluster</name>
        <dbReference type="ChEBI" id="CHEBI:49883"/>
    </ligand>
</feature>
<feature type="binding site" evidence="1">
    <location>
        <position position="89"/>
    </location>
    <ligand>
        <name>[4Fe-4S] cluster</name>
        <dbReference type="ChEBI" id="CHEBI:49883"/>
    </ligand>
</feature>
<feature type="binding site" evidence="1">
    <location>
        <position position="92"/>
    </location>
    <ligand>
        <name>[4Fe-4S] cluster</name>
        <dbReference type="ChEBI" id="CHEBI:49883"/>
    </ligand>
</feature>
<feature type="binding site" evidence="1">
    <location>
        <position position="171"/>
    </location>
    <ligand>
        <name>[4Fe-4S] cluster</name>
        <dbReference type="ChEBI" id="CHEBI:49883"/>
    </ligand>
</feature>
<feature type="binding site" evidence="1">
    <location>
        <position position="276"/>
    </location>
    <ligand>
        <name>S-adenosyl-L-methionine</name>
        <dbReference type="ChEBI" id="CHEBI:59789"/>
    </ligand>
</feature>
<feature type="binding site" evidence="1">
    <location>
        <position position="305"/>
    </location>
    <ligand>
        <name>S-adenosyl-L-methionine</name>
        <dbReference type="ChEBI" id="CHEBI:59789"/>
    </ligand>
</feature>
<feature type="binding site" evidence="1">
    <location>
        <position position="310"/>
    </location>
    <ligand>
        <name>S-adenosyl-L-methionine</name>
        <dbReference type="ChEBI" id="CHEBI:59789"/>
    </ligand>
</feature>
<feature type="binding site" evidence="1">
    <location>
        <position position="326"/>
    </location>
    <ligand>
        <name>S-adenosyl-L-methionine</name>
        <dbReference type="ChEBI" id="CHEBI:59789"/>
    </ligand>
</feature>
<feature type="binding site" evidence="1">
    <location>
        <position position="353"/>
    </location>
    <ligand>
        <name>S-adenosyl-L-methionine</name>
        <dbReference type="ChEBI" id="CHEBI:59789"/>
    </ligand>
</feature>
<feature type="binding site" evidence="1">
    <location>
        <position position="373"/>
    </location>
    <ligand>
        <name>S-adenosyl-L-methionine</name>
        <dbReference type="ChEBI" id="CHEBI:59789"/>
    </ligand>
</feature>
<proteinExistence type="inferred from homology"/>